<protein>
    <recommendedName>
        <fullName evidence="3">Demethyllactenocin mycarosyltransferase</fullName>
        <ecNumber evidence="2">2.4.1.318</ecNumber>
    </recommendedName>
</protein>
<reference key="1">
    <citation type="journal article" date="2000" name="Microbiology">
        <title>The mycarose-biosynthetic genes of Streptomyces fradiae, producer of tylosin.</title>
        <authorList>
            <person name="Bate N."/>
            <person name="Butler A.R."/>
            <person name="Smith I.P."/>
            <person name="Cundliffe E."/>
        </authorList>
    </citation>
    <scope>NUCLEOTIDE SEQUENCE [GENOMIC DNA]</scope>
    <scope>FUNCTION</scope>
    <scope>CATALYTIC ACTIVITY</scope>
    <scope>DISRUPTION PHENOTYPE</scope>
    <source>
        <strain>T59235</strain>
    </source>
</reference>
<sequence>MAGLRPGAGVPPGTPWPISPGKHCVRSAISRRARLPYHAPGTPLGRFRRAPDEGSCRMAHIAFFILPAAGHVNPTLGVAEELAARGHRVTYALPEDMADRAVRVGARAVTYPLDRERFRADMVPKEESDEYTDEGEFLKVLEWLLDTTADTLPLLESAFAEDRPDVVANDPSTFWTGLLLAGKWDIPVIRSTPSYASNEHWALHPPFEPGAAQVDPALIELTARAEKLLKEHGTTSDPVAFAATVQSGPGLFYMPRYFQYAGETFDDRHHFVGPCAPRASFHGTWQRPEDGRPLVMVSLGTIYNERPGIFRACVEAFRDRPWNILLVLGGGLGAGDLGPLPENVLVRDFVPLGDVLPHTDLLVNHGGTSTAMEALAHGVPIVAMPEMPEPRATARRIAELDLGDWLLPGEVTAEKLSGIAQRVLTDDRIRKGLDRMRGEIRRAGGPAVAADVIEGLLSPAA</sequence>
<organism>
    <name type="scientific">Streptomyces fradiae</name>
    <name type="common">Streptomyces roseoflavus</name>
    <dbReference type="NCBI Taxonomy" id="1906"/>
    <lineage>
        <taxon>Bacteria</taxon>
        <taxon>Bacillati</taxon>
        <taxon>Actinomycetota</taxon>
        <taxon>Actinomycetes</taxon>
        <taxon>Kitasatosporales</taxon>
        <taxon>Streptomycetaceae</taxon>
        <taxon>Streptomyces</taxon>
    </lineage>
</organism>
<name>TYLCV_STRFR</name>
<proteinExistence type="evidence at protein level"/>
<keyword id="KW-0045">Antibiotic biosynthesis</keyword>
<keyword id="KW-0808">Transferase</keyword>
<feature type="chain" id="PRO_0000430730" description="Demethyllactenocin mycarosyltransferase">
    <location>
        <begin position="1"/>
        <end position="461"/>
    </location>
</feature>
<feature type="region of interest" description="Disordered" evidence="1">
    <location>
        <begin position="1"/>
        <end position="21"/>
    </location>
</feature>
<dbReference type="EC" id="2.4.1.318" evidence="2"/>
<dbReference type="EMBL" id="AF147704">
    <property type="protein sequence ID" value="AAD41824.1"/>
    <property type="molecule type" value="Genomic_DNA"/>
</dbReference>
<dbReference type="SMR" id="Q9XC67"/>
<dbReference type="STRING" id="1906.SFRA_26370"/>
<dbReference type="CAZy" id="GT1">
    <property type="family name" value="Glycosyltransferase Family 1"/>
</dbReference>
<dbReference type="KEGG" id="ag:AAD41824"/>
<dbReference type="eggNOG" id="COG1819">
    <property type="taxonomic scope" value="Bacteria"/>
</dbReference>
<dbReference type="BioCyc" id="MetaCyc:MONOMER-18391"/>
<dbReference type="BRENDA" id="2.4.1.318">
    <property type="organism ID" value="5932"/>
</dbReference>
<dbReference type="GO" id="GO:0016758">
    <property type="term" value="F:hexosyltransferase activity"/>
    <property type="evidence" value="ECO:0007669"/>
    <property type="project" value="InterPro"/>
</dbReference>
<dbReference type="GO" id="GO:0008194">
    <property type="term" value="F:UDP-glycosyltransferase activity"/>
    <property type="evidence" value="ECO:0007669"/>
    <property type="project" value="InterPro"/>
</dbReference>
<dbReference type="GO" id="GO:0017000">
    <property type="term" value="P:antibiotic biosynthetic process"/>
    <property type="evidence" value="ECO:0007669"/>
    <property type="project" value="UniProtKB-KW"/>
</dbReference>
<dbReference type="CDD" id="cd03784">
    <property type="entry name" value="GT1_Gtf-like"/>
    <property type="match status" value="1"/>
</dbReference>
<dbReference type="FunFam" id="3.40.50.2000:FF:000072">
    <property type="entry name" value="Glycosyl transferase"/>
    <property type="match status" value="1"/>
</dbReference>
<dbReference type="Gene3D" id="3.40.50.2000">
    <property type="entry name" value="Glycogen Phosphorylase B"/>
    <property type="match status" value="2"/>
</dbReference>
<dbReference type="InterPro" id="IPR010610">
    <property type="entry name" value="EryCIII-like_C"/>
</dbReference>
<dbReference type="InterPro" id="IPR050426">
    <property type="entry name" value="Glycosyltransferase_28"/>
</dbReference>
<dbReference type="InterPro" id="IPR002213">
    <property type="entry name" value="UDP_glucos_trans"/>
</dbReference>
<dbReference type="InterPro" id="IPR006326">
    <property type="entry name" value="UDPGT_MGT-like"/>
</dbReference>
<dbReference type="NCBIfam" id="TIGR01426">
    <property type="entry name" value="MGT"/>
    <property type="match status" value="1"/>
</dbReference>
<dbReference type="PANTHER" id="PTHR48050">
    <property type="entry name" value="STEROL 3-BETA-GLUCOSYLTRANSFERASE"/>
    <property type="match status" value="1"/>
</dbReference>
<dbReference type="PANTHER" id="PTHR48050:SF13">
    <property type="entry name" value="STEROL 3-BETA-GLUCOSYLTRANSFERASE UGT80A2"/>
    <property type="match status" value="1"/>
</dbReference>
<dbReference type="Pfam" id="PF06722">
    <property type="entry name" value="EryCIII-like_C"/>
    <property type="match status" value="1"/>
</dbReference>
<dbReference type="SUPFAM" id="SSF53756">
    <property type="entry name" value="UDP-Glycosyltransferase/glycogen phosphorylase"/>
    <property type="match status" value="1"/>
</dbReference>
<evidence type="ECO:0000256" key="1">
    <source>
        <dbReference type="SAM" id="MobiDB-lite"/>
    </source>
</evidence>
<evidence type="ECO:0000269" key="2">
    <source>
    </source>
</evidence>
<evidence type="ECO:0000303" key="3">
    <source>
    </source>
</evidence>
<evidence type="ECO:0000305" key="4"/>
<gene>
    <name type="primary">tylCV</name>
</gene>
<accession>Q9XC67</accession>
<comment type="function">
    <text evidence="2">Involved in the biosynthesis of mycarose which is a 6-deoxyhexose sugar required during production of the macrolide antibiotic tylosin. Catalyzes the transfer of L-mycarosyl from dTDP-beta-L-mycarose to demethyllactenocin to yield demethylmacrocin.</text>
</comment>
<comment type="catalytic activity">
    <reaction evidence="2">
        <text>dTDP-beta-L-mycarose + demethyllactenocin = demethylmacrocin + dTDP + H(+)</text>
        <dbReference type="Rhea" id="RHEA:14649"/>
        <dbReference type="ChEBI" id="CHEBI:15378"/>
        <dbReference type="ChEBI" id="CHEBI:58369"/>
        <dbReference type="ChEBI" id="CHEBI:76810"/>
        <dbReference type="ChEBI" id="CHEBI:76814"/>
        <dbReference type="ChEBI" id="CHEBI:76819"/>
        <dbReference type="EC" id="2.4.1.318"/>
    </reaction>
</comment>
<comment type="disruption phenotype">
    <text evidence="2">Cells lacking this gene accumulate desmycosin (tylosin B).</text>
</comment>
<comment type="similarity">
    <text evidence="4">Belongs to the UDP-glycosyltransferase family.</text>
</comment>